<organism evidence="20">
    <name type="scientific">Mus musculus</name>
    <name type="common">Mouse</name>
    <dbReference type="NCBI Taxonomy" id="10090"/>
    <lineage>
        <taxon>Eukaryota</taxon>
        <taxon>Metazoa</taxon>
        <taxon>Chordata</taxon>
        <taxon>Craniata</taxon>
        <taxon>Vertebrata</taxon>
        <taxon>Euteleostomi</taxon>
        <taxon>Mammalia</taxon>
        <taxon>Eutheria</taxon>
        <taxon>Euarchontoglires</taxon>
        <taxon>Glires</taxon>
        <taxon>Rodentia</taxon>
        <taxon>Myomorpha</taxon>
        <taxon>Muroidea</taxon>
        <taxon>Muridae</taxon>
        <taxon>Murinae</taxon>
        <taxon>Mus</taxon>
        <taxon>Mus</taxon>
    </lineage>
</organism>
<proteinExistence type="evidence at protein level"/>
<name>USH1C_MOUSE</name>
<evidence type="ECO:0000250" key="1">
    <source>
        <dbReference type="UniProtKB" id="Q9Y6N9"/>
    </source>
</evidence>
<evidence type="ECO:0000255" key="2"/>
<evidence type="ECO:0000255" key="3">
    <source>
        <dbReference type="PROSITE-ProRule" id="PRU00143"/>
    </source>
</evidence>
<evidence type="ECO:0000256" key="4">
    <source>
        <dbReference type="SAM" id="MobiDB-lite"/>
    </source>
</evidence>
<evidence type="ECO:0000269" key="5">
    <source>
    </source>
</evidence>
<evidence type="ECO:0000269" key="6">
    <source>
    </source>
</evidence>
<evidence type="ECO:0000269" key="7">
    <source>
    </source>
</evidence>
<evidence type="ECO:0000269" key="8">
    <source>
    </source>
</evidence>
<evidence type="ECO:0000269" key="9">
    <source>
    </source>
</evidence>
<evidence type="ECO:0000269" key="10">
    <source>
    </source>
</evidence>
<evidence type="ECO:0000269" key="11">
    <source>
    </source>
</evidence>
<evidence type="ECO:0000269" key="12">
    <source>
    </source>
</evidence>
<evidence type="ECO:0000269" key="13">
    <source>
    </source>
</evidence>
<evidence type="ECO:0000269" key="14">
    <source>
    </source>
</evidence>
<evidence type="ECO:0000303" key="15">
    <source>
    </source>
</evidence>
<evidence type="ECO:0000303" key="16">
    <source>
    </source>
</evidence>
<evidence type="ECO:0000303" key="17">
    <source>
    </source>
</evidence>
<evidence type="ECO:0000303" key="18">
    <source ref="2"/>
</evidence>
<evidence type="ECO:0000305" key="19"/>
<evidence type="ECO:0000312" key="20">
    <source>
        <dbReference type="EMBL" id="AAG12458.1"/>
    </source>
</evidence>
<evidence type="ECO:0007744" key="21">
    <source>
    </source>
</evidence>
<evidence type="ECO:0007829" key="22">
    <source>
        <dbReference type="PDB" id="1V6B"/>
    </source>
</evidence>
<feature type="chain" id="PRO_0000065728" description="Harmonin">
    <location>
        <begin position="1"/>
        <end position="910"/>
    </location>
</feature>
<feature type="domain" description="PDZ 1" evidence="3 19">
    <location>
        <begin position="87"/>
        <end position="171"/>
    </location>
</feature>
<feature type="domain" description="PDZ 2" evidence="3 19">
    <location>
        <begin position="211"/>
        <end position="295"/>
    </location>
</feature>
<feature type="domain" description="PDZ 3" evidence="3 19">
    <location>
        <begin position="752"/>
        <end position="839"/>
    </location>
</feature>
<feature type="region of interest" description="N-terminal domain" evidence="1">
    <location>
        <begin position="1"/>
        <end position="86"/>
    </location>
</feature>
<feature type="region of interest" description="Mediates interaction with MYO7B" evidence="1">
    <location>
        <begin position="194"/>
        <end position="833"/>
    </location>
</feature>
<feature type="region of interest" description="Disordered" evidence="4">
    <location>
        <begin position="563"/>
        <end position="688"/>
    </location>
</feature>
<feature type="region of interest" description="Disordered" evidence="4">
    <location>
        <begin position="890"/>
        <end position="910"/>
    </location>
</feature>
<feature type="coiled-coil region" evidence="2">
    <location>
        <begin position="299"/>
        <end position="377"/>
    </location>
</feature>
<feature type="coiled-coil region" evidence="2">
    <location>
        <begin position="417"/>
        <end position="482"/>
    </location>
</feature>
<feature type="compositionally biased region" description="Pro residues" evidence="4">
    <location>
        <begin position="564"/>
        <end position="582"/>
    </location>
</feature>
<feature type="compositionally biased region" description="Low complexity" evidence="4">
    <location>
        <begin position="583"/>
        <end position="596"/>
    </location>
</feature>
<feature type="compositionally biased region" description="Pro residues" evidence="4">
    <location>
        <begin position="599"/>
        <end position="611"/>
    </location>
</feature>
<feature type="compositionally biased region" description="Polar residues" evidence="4">
    <location>
        <begin position="650"/>
        <end position="664"/>
    </location>
</feature>
<feature type="compositionally biased region" description="Low complexity" evidence="4">
    <location>
        <begin position="899"/>
        <end position="910"/>
    </location>
</feature>
<feature type="modified residue" description="Phosphoserine" evidence="21">
    <location>
        <position position="219"/>
    </location>
</feature>
<feature type="splice variant" id="VSP_050530" description="In isoform 1." evidence="15 16 17">
    <original>SFGWFYRYDGKFPTIRKKAK</original>
    <variation>YDQGVEPADHLDGSTEEQRQ</variation>
    <location>
        <begin position="404"/>
        <end position="423"/>
    </location>
</feature>
<feature type="splice variant" id="VSP_050531" description="In isoform 1." evidence="15 16 17">
    <location>
        <begin position="424"/>
        <end position="727"/>
    </location>
</feature>
<feature type="splice variant" id="VSP_050532" description="In isoform 2." evidence="18">
    <original>SSLPSSAAES</original>
    <variation>RKPPAGPKAA</variation>
    <location>
        <begin position="850"/>
        <end position="859"/>
    </location>
</feature>
<feature type="splice variant" id="VSP_050533" description="In isoform 1." evidence="15 16 17">
    <original>SSL</original>
    <variation>TFF</variation>
    <location>
        <begin position="850"/>
        <end position="852"/>
    </location>
</feature>
<feature type="splice variant" id="VSP_050534" description="In isoform 2." evidence="18">
    <location>
        <begin position="860"/>
        <end position="910"/>
    </location>
</feature>
<feature type="sequence conflict" description="In Ref. 3; AAH10819." evidence="19" ref="3">
    <original>E</original>
    <variation>K</variation>
    <location>
        <position position="375"/>
    </location>
</feature>
<feature type="sequence conflict" description="In Ref. 4; BAB25568." evidence="19" ref="4">
    <original>Y</original>
    <variation>H</variation>
    <location>
        <position position="740"/>
    </location>
</feature>
<feature type="helix" evidence="22">
    <location>
        <begin position="745"/>
        <end position="748"/>
    </location>
</feature>
<feature type="strand" evidence="22">
    <location>
        <begin position="753"/>
        <end position="760"/>
    </location>
</feature>
<feature type="strand" evidence="22">
    <location>
        <begin position="767"/>
        <end position="771"/>
    </location>
</feature>
<feature type="strand" evidence="22">
    <location>
        <begin position="774"/>
        <end position="776"/>
    </location>
</feature>
<feature type="strand" evidence="22">
    <location>
        <begin position="778"/>
        <end position="783"/>
    </location>
</feature>
<feature type="helix" evidence="22">
    <location>
        <begin position="789"/>
        <end position="793"/>
    </location>
</feature>
<feature type="strand" evidence="22">
    <location>
        <begin position="801"/>
        <end position="807"/>
    </location>
</feature>
<feature type="helix" evidence="22">
    <location>
        <begin position="815"/>
        <end position="828"/>
    </location>
</feature>
<feature type="strand" evidence="22">
    <location>
        <begin position="831"/>
        <end position="838"/>
    </location>
</feature>
<keyword id="KW-0002">3D-structure</keyword>
<keyword id="KW-0025">Alternative splicing</keyword>
<keyword id="KW-0966">Cell projection</keyword>
<keyword id="KW-0175">Coiled coil</keyword>
<keyword id="KW-0963">Cytoplasm</keyword>
<keyword id="KW-0206">Cytoskeleton</keyword>
<keyword id="KW-0221">Differentiation</keyword>
<keyword id="KW-1009">Hearing</keyword>
<keyword id="KW-0597">Phosphoprotein</keyword>
<keyword id="KW-1185">Reference proteome</keyword>
<keyword id="KW-0677">Repeat</keyword>
<gene>
    <name type="primary">Ush1c</name>
</gene>
<protein>
    <recommendedName>
        <fullName>Harmonin</fullName>
    </recommendedName>
    <alternativeName>
        <fullName>PDZ domain-containing protein</fullName>
    </alternativeName>
    <alternativeName>
        <fullName>Usher syndrome type-1C protein homolog</fullName>
    </alternativeName>
</protein>
<comment type="function">
    <text evidence="11 12 14">Anchoring/scaffolding protein that is a part of the functional network formed by USH1C, USH1G, CDH23 and MYO7A that mediates mechanotransduction in cochlear hair cells. Required for normal development and maintenance of cochlear hair cell bundles (PubMed:19447093). As part of the intermicrovillar adhesion complex/IMAC plays a role in brush border differentiation, controlling microvilli organization and length. Probably plays a central regulatory role in the assembly of the complex, recruiting CDHR2, CDHR5 and MYO7B to the microvilli tips (PubMed:24725409, PubMed:26812018).</text>
</comment>
<comment type="subunit">
    <text evidence="1 6 7 9 10 11 13">Part of the IMAC/intermicrovillar adhesion complex/intermicrovillar tip-link complex composed of ANKS4B, MYO7B, USH1C, CDHR2 and CDHR5 (By similarity). Part of a complex composed of USH1C, USH1G and MYO7A (By similarity). Interacts with F-actin (PubMed:19447093). Interacts with USH2A (PubMed:16301217). Interacts with SLC4A7 (PubMed:16301216). Interacts (via PDZ1 domain) with the C-terminus of USHBP1 (By similarity). Interacts (via N-terminus and PDZ 2 domain) with CDH23 (PubMed:19447093). Interacts with USH1G (By similarity). Interacts with MYO7B (PubMed:26812017). Interacts with CDHR2 and CDHR5; may mediate their interaction with MYO7B at the microvilli tip (By similarity) (PubMed:26812017). Interacts (via PDZ 1 domain) with ANKS4B (PubMed:12588794, PubMed:15461667). Interacts (via PDZ 1 domain) with DOCK4 (By similarity).</text>
</comment>
<comment type="interaction">
    <interactant intactId="EBI-7418968">
        <id>Q9ES64</id>
    </interactant>
    <interactant intactId="EBI-6556746">
        <id>Q99PJ1</id>
        <label>Pcdh15</label>
    </interactant>
    <organismsDiffer>false</organismsDiffer>
    <experiments>3</experiments>
</comment>
<comment type="interaction">
    <interactant intactId="EBI-7418919">
        <id>Q9ES64-3</id>
    </interactant>
    <interactant intactId="EBI-7419021">
        <id>Q99PF4</id>
        <label>Cdh23</label>
    </interactant>
    <organismsDiffer>false</organismsDiffer>
    <experiments>2</experiments>
</comment>
<comment type="interaction">
    <interactant intactId="EBI-7418919">
        <id>Q9ES64-3</id>
    </interactant>
    <interactant intactId="EBI-6556746">
        <id>Q99PJ1</id>
        <label>Pcdh15</label>
    </interactant>
    <organismsDiffer>false</organismsDiffer>
    <experiments>2</experiments>
</comment>
<comment type="interaction">
    <interactant intactId="EBI-7418919">
        <id>Q9ES64-3</id>
    </interactant>
    <interactant intactId="EBI-11621670">
        <id>Q8BTY2</id>
        <label>Slc4a7</label>
    </interactant>
    <organismsDiffer>false</organismsDiffer>
    <experiments>2</experiments>
</comment>
<comment type="interaction">
    <interactant intactId="EBI-7418919">
        <id>Q9ES64-3</id>
    </interactant>
    <interactant intactId="EBI-7418889">
        <id>Q80T11</id>
        <label>Ush1g</label>
    </interactant>
    <organismsDiffer>false</organismsDiffer>
    <experiments>3</experiments>
</comment>
<comment type="interaction">
    <interactant intactId="EBI-7418919">
        <id>Q9ES64-3</id>
    </interactant>
    <interactant intactId="EBI-11621707">
        <id>Q8WXG9-1</id>
        <label>ADGRV1</label>
    </interactant>
    <organismsDiffer>true</organismsDiffer>
    <experiments>2</experiments>
</comment>
<comment type="interaction">
    <interactant intactId="EBI-7418919">
        <id>Q9ES64-3</id>
    </interactant>
    <interactant intactId="EBI-11621644">
        <id>O75445-1</id>
        <label>USH2A</label>
    </interactant>
    <organismsDiffer>true</organismsDiffer>
    <experiments>2</experiments>
</comment>
<comment type="subcellular location">
    <subcellularLocation>
        <location evidence="1">Cytoplasm</location>
        <location evidence="1">Cytosol</location>
    </subcellularLocation>
    <subcellularLocation>
        <location evidence="11">Cytoplasm</location>
        <location evidence="11">Cytoskeleton</location>
    </subcellularLocation>
    <subcellularLocation>
        <location evidence="12">Cell projection</location>
        <location evidence="12">Microvillus</location>
    </subcellularLocation>
    <text evidence="11 12">Colocalizes with F-actin (PubMed:19447093). Detected at the tip of cochlear hair cell stereocilia (PubMed:19447093). Enriched in microvilli of the intestinal brush border (PubMed:24725409).</text>
</comment>
<comment type="alternative products">
    <event type="alternative splicing"/>
    <isoform>
        <id>Q9ES64-1</id>
        <name evidence="19">3</name>
        <name evidence="5">b3</name>
        <sequence type="displayed"/>
    </isoform>
    <isoform>
        <id>Q9ES64-2</id>
        <name evidence="19">2</name>
        <name evidence="19">b2</name>
        <sequence type="described" ref="VSP_050532 VSP_050534"/>
    </isoform>
    <isoform>
        <id>Q9ES64-3</id>
        <name evidence="19">1</name>
        <name evidence="5">a1</name>
        <sequence type="described" ref="VSP_050530 VSP_050531 VSP_050533"/>
    </isoform>
    <text evidence="5">Additional isoforms exist.</text>
</comment>
<comment type="tissue specificity">
    <text evidence="5 11 12">Detected in stereocilia of cochlear hair cells (at protein level). Isoform 1 is expressed in the eye, cochlea, vestibule, heart, kidney, small intestine and testis; it is barely visible in skeletal muscle, liver, and lung and is absent from the brain. Isoforms 2 and 3 are expressed in the cochlea and vestibule.</text>
</comment>
<comment type="domain">
    <text evidence="1 7">The PDZ 1 domain mediates interaction with ANKS4B, USHBP1, USH1G, SLC4A7.</text>
</comment>
<comment type="domain">
    <text evidence="1">The N-terminal region constitutes an independently folded domain that has structural similarity with the CCM2 C-terminus, despite very low sequence similarity.</text>
</comment>
<comment type="disruption phenotype">
    <text evidence="12">Mice lacking Ush1c display abnormal brush border morphology along the length of the intestinal tract.</text>
</comment>
<dbReference type="EMBL" id="AF228925">
    <property type="protein sequence ID" value="AAG12458.1"/>
    <property type="molecule type" value="mRNA"/>
</dbReference>
<dbReference type="EMBL" id="AF228924">
    <property type="protein sequence ID" value="AAG12457.1"/>
    <property type="molecule type" value="mRNA"/>
</dbReference>
<dbReference type="EMBL" id="AY103465">
    <property type="protein sequence ID" value="AAM44072.1"/>
    <property type="molecule type" value="mRNA"/>
</dbReference>
<dbReference type="EMBL" id="BC010819">
    <property type="protein sequence ID" value="AAH10819.1"/>
    <property type="molecule type" value="mRNA"/>
</dbReference>
<dbReference type="EMBL" id="AK008274">
    <property type="protein sequence ID" value="BAB25568.2"/>
    <property type="molecule type" value="mRNA"/>
</dbReference>
<dbReference type="CCDS" id="CCDS21276.1">
    <molecule id="Q9ES64-1"/>
</dbReference>
<dbReference type="CCDS" id="CCDS85309.1">
    <molecule id="Q9ES64-2"/>
</dbReference>
<dbReference type="RefSeq" id="NP_001157205.1">
    <property type="nucleotide sequence ID" value="NM_001163733.1"/>
</dbReference>
<dbReference type="RefSeq" id="NP_076138.2">
    <property type="nucleotide sequence ID" value="NM_023649.2"/>
</dbReference>
<dbReference type="RefSeq" id="NP_710143.2">
    <property type="nucleotide sequence ID" value="NM_153677.2"/>
</dbReference>
<dbReference type="PDB" id="1V6B">
    <property type="method" value="NMR"/>
    <property type="chains" value="A=742-849"/>
</dbReference>
<dbReference type="PDBsum" id="1V6B"/>
<dbReference type="BMRB" id="Q9ES64"/>
<dbReference type="SMR" id="Q9ES64"/>
<dbReference type="BioGRID" id="215143">
    <property type="interactions" value="5"/>
</dbReference>
<dbReference type="CORUM" id="Q9ES64"/>
<dbReference type="FunCoup" id="Q9ES64">
    <property type="interactions" value="24"/>
</dbReference>
<dbReference type="IntAct" id="Q9ES64">
    <property type="interactions" value="6"/>
</dbReference>
<dbReference type="MINT" id="Q9ES64"/>
<dbReference type="STRING" id="10090.ENSMUSP00000009667"/>
<dbReference type="iPTMnet" id="Q9ES64"/>
<dbReference type="PhosphoSitePlus" id="Q9ES64"/>
<dbReference type="jPOST" id="Q9ES64"/>
<dbReference type="PaxDb" id="10090-ENSMUSP00000009667"/>
<dbReference type="PeptideAtlas" id="Q9ES64"/>
<dbReference type="ProteomicsDB" id="299648">
    <molecule id="Q9ES64-1"/>
</dbReference>
<dbReference type="ProteomicsDB" id="299649">
    <molecule id="Q9ES64-2"/>
</dbReference>
<dbReference type="ProteomicsDB" id="299650">
    <molecule id="Q9ES64-3"/>
</dbReference>
<dbReference type="DNASU" id="72088"/>
<dbReference type="GeneID" id="72088"/>
<dbReference type="KEGG" id="mmu:72088"/>
<dbReference type="UCSC" id="uc009gyh.2">
    <molecule id="Q9ES64-3"/>
    <property type="organism name" value="mouse"/>
</dbReference>
<dbReference type="AGR" id="MGI:1919338"/>
<dbReference type="CTD" id="10083"/>
<dbReference type="MGI" id="MGI:1919338">
    <property type="gene designation" value="Ush1c"/>
</dbReference>
<dbReference type="eggNOG" id="KOG3528">
    <property type="taxonomic scope" value="Eukaryota"/>
</dbReference>
<dbReference type="InParanoid" id="Q9ES64"/>
<dbReference type="OrthoDB" id="7734647at2759"/>
<dbReference type="PhylomeDB" id="Q9ES64"/>
<dbReference type="BioGRID-ORCS" id="72088">
    <property type="hits" value="1 hit in 77 CRISPR screens"/>
</dbReference>
<dbReference type="EvolutionaryTrace" id="Q9ES64"/>
<dbReference type="PRO" id="PR:Q9ES64"/>
<dbReference type="Proteomes" id="UP000000589">
    <property type="component" value="Unplaced"/>
</dbReference>
<dbReference type="RNAct" id="Q9ES64">
    <property type="molecule type" value="protein"/>
</dbReference>
<dbReference type="GO" id="GO:0005903">
    <property type="term" value="C:brush border"/>
    <property type="evidence" value="ECO:0000314"/>
    <property type="project" value="UniProtKB"/>
</dbReference>
<dbReference type="GO" id="GO:0005856">
    <property type="term" value="C:cytoskeleton"/>
    <property type="evidence" value="ECO:0007669"/>
    <property type="project" value="UniProtKB-SubCell"/>
</dbReference>
<dbReference type="GO" id="GO:0005829">
    <property type="term" value="C:cytosol"/>
    <property type="evidence" value="ECO:0000304"/>
    <property type="project" value="Reactome"/>
</dbReference>
<dbReference type="GO" id="GO:0005902">
    <property type="term" value="C:microvillus"/>
    <property type="evidence" value="ECO:0000314"/>
    <property type="project" value="UniProtKB"/>
</dbReference>
<dbReference type="GO" id="GO:0001917">
    <property type="term" value="C:photoreceptor inner segment"/>
    <property type="evidence" value="ECO:0000314"/>
    <property type="project" value="MGI"/>
</dbReference>
<dbReference type="GO" id="GO:0001750">
    <property type="term" value="C:photoreceptor outer segment"/>
    <property type="evidence" value="ECO:0000314"/>
    <property type="project" value="MGI"/>
</dbReference>
<dbReference type="GO" id="GO:0005886">
    <property type="term" value="C:plasma membrane"/>
    <property type="evidence" value="ECO:0000314"/>
    <property type="project" value="MGI"/>
</dbReference>
<dbReference type="GO" id="GO:0032420">
    <property type="term" value="C:stereocilium"/>
    <property type="evidence" value="ECO:0000314"/>
    <property type="project" value="MGI"/>
</dbReference>
<dbReference type="GO" id="GO:0045202">
    <property type="term" value="C:synapse"/>
    <property type="evidence" value="ECO:0000314"/>
    <property type="project" value="MGI"/>
</dbReference>
<dbReference type="GO" id="GO:1990435">
    <property type="term" value="C:upper tip-link density"/>
    <property type="evidence" value="ECO:0000314"/>
    <property type="project" value="MGI"/>
</dbReference>
<dbReference type="GO" id="GO:0030507">
    <property type="term" value="F:spectrin binding"/>
    <property type="evidence" value="ECO:0000266"/>
    <property type="project" value="MGI"/>
</dbReference>
<dbReference type="GO" id="GO:0051017">
    <property type="term" value="P:actin filament bundle assembly"/>
    <property type="evidence" value="ECO:0000314"/>
    <property type="project" value="MGI"/>
</dbReference>
<dbReference type="GO" id="GO:1904970">
    <property type="term" value="P:brush border assembly"/>
    <property type="evidence" value="ECO:0000315"/>
    <property type="project" value="UniProtKB"/>
</dbReference>
<dbReference type="GO" id="GO:0042491">
    <property type="term" value="P:inner ear auditory receptor cell differentiation"/>
    <property type="evidence" value="ECO:0000315"/>
    <property type="project" value="MGI"/>
</dbReference>
<dbReference type="GO" id="GO:0042472">
    <property type="term" value="P:inner ear morphogenesis"/>
    <property type="evidence" value="ECO:0000315"/>
    <property type="project" value="MGI"/>
</dbReference>
<dbReference type="GO" id="GO:0060122">
    <property type="term" value="P:inner ear receptor cell stereocilium organization"/>
    <property type="evidence" value="ECO:0000315"/>
    <property type="project" value="MGI"/>
</dbReference>
<dbReference type="GO" id="GO:0050885">
    <property type="term" value="P:neuromuscular process controlling balance"/>
    <property type="evidence" value="ECO:0000315"/>
    <property type="project" value="MGI"/>
</dbReference>
<dbReference type="GO" id="GO:0030046">
    <property type="term" value="P:parallel actin filament bundle assembly"/>
    <property type="evidence" value="ECO:0000314"/>
    <property type="project" value="MGI"/>
</dbReference>
<dbReference type="GO" id="GO:1904106">
    <property type="term" value="P:protein localization to microvillus"/>
    <property type="evidence" value="ECO:0000315"/>
    <property type="project" value="UniProtKB"/>
</dbReference>
<dbReference type="GO" id="GO:0032532">
    <property type="term" value="P:regulation of microvillus length"/>
    <property type="evidence" value="ECO:0000315"/>
    <property type="project" value="UniProtKB"/>
</dbReference>
<dbReference type="GO" id="GO:0007605">
    <property type="term" value="P:sensory perception of sound"/>
    <property type="evidence" value="ECO:0000315"/>
    <property type="project" value="MGI"/>
</dbReference>
<dbReference type="CDD" id="cd07353">
    <property type="entry name" value="harmonin_N"/>
    <property type="match status" value="1"/>
</dbReference>
<dbReference type="CDD" id="cd06737">
    <property type="entry name" value="PDZ1_harmonin"/>
    <property type="match status" value="1"/>
</dbReference>
<dbReference type="CDD" id="cd06738">
    <property type="entry name" value="PDZ2_harmonin"/>
    <property type="match status" value="1"/>
</dbReference>
<dbReference type="CDD" id="cd06739">
    <property type="entry name" value="PDZ3_harmonin"/>
    <property type="match status" value="1"/>
</dbReference>
<dbReference type="FunFam" id="1.20.1160.20:FF:000001">
    <property type="entry name" value="harmonin isoform X1"/>
    <property type="match status" value="1"/>
</dbReference>
<dbReference type="FunFam" id="2.30.42.10:FF:000062">
    <property type="entry name" value="harmonin isoform X1"/>
    <property type="match status" value="1"/>
</dbReference>
<dbReference type="FunFam" id="2.30.42.10:FF:000071">
    <property type="entry name" value="harmonin isoform X1"/>
    <property type="match status" value="1"/>
</dbReference>
<dbReference type="FunFam" id="2.30.42.10:FF:000104">
    <property type="entry name" value="harmonin isoform X2"/>
    <property type="match status" value="1"/>
</dbReference>
<dbReference type="Gene3D" id="1.20.1160.20">
    <property type="match status" value="1"/>
</dbReference>
<dbReference type="Gene3D" id="2.30.42.10">
    <property type="match status" value="3"/>
</dbReference>
<dbReference type="InterPro" id="IPR030237">
    <property type="entry name" value="Harmonin_N"/>
</dbReference>
<dbReference type="InterPro" id="IPR001478">
    <property type="entry name" value="PDZ"/>
</dbReference>
<dbReference type="InterPro" id="IPR036034">
    <property type="entry name" value="PDZ_sf"/>
</dbReference>
<dbReference type="InterPro" id="IPR051844">
    <property type="entry name" value="USH2_Complex_Protein"/>
</dbReference>
<dbReference type="PANTHER" id="PTHR23116:SF36">
    <property type="entry name" value="HARMONIN"/>
    <property type="match status" value="1"/>
</dbReference>
<dbReference type="PANTHER" id="PTHR23116">
    <property type="entry name" value="PDZ DOMAIN CONTAINING WHIRLIN AND HARMONIN-RELATED"/>
    <property type="match status" value="1"/>
</dbReference>
<dbReference type="Pfam" id="PF00595">
    <property type="entry name" value="PDZ"/>
    <property type="match status" value="3"/>
</dbReference>
<dbReference type="Pfam" id="PF21219">
    <property type="entry name" value="USH1C_N"/>
    <property type="match status" value="1"/>
</dbReference>
<dbReference type="SMART" id="SM00228">
    <property type="entry name" value="PDZ"/>
    <property type="match status" value="3"/>
</dbReference>
<dbReference type="SUPFAM" id="SSF50156">
    <property type="entry name" value="PDZ domain-like"/>
    <property type="match status" value="3"/>
</dbReference>
<dbReference type="PROSITE" id="PS50106">
    <property type="entry name" value="PDZ"/>
    <property type="match status" value="3"/>
</dbReference>
<reference evidence="19" key="1">
    <citation type="journal article" date="2000" name="Nat. Genet.">
        <title>A defect in harmonin, a PDZ domain-containing protein expressed in the inner ear sensory hair cells, underlies Usher syndrome type 1C.</title>
        <authorList>
            <person name="Verpy E."/>
            <person name="Leibovici M."/>
            <person name="Zwaenepoel I."/>
            <person name="Liu X.-Z."/>
            <person name="Gal A."/>
            <person name="Salem N."/>
            <person name="Mansour A."/>
            <person name="Blanchard S."/>
            <person name="Kobayashi I."/>
            <person name="Keats B.J.B."/>
            <person name="Slim R."/>
            <person name="Petit C."/>
        </authorList>
    </citation>
    <scope>NUCLEOTIDE SEQUENCE [MRNA] (ISOFORMS 1 AND 3)</scope>
    <scope>TISSUE SPECIFICITY</scope>
    <scope>ALTERNATIVE SPLICING</scope>
    <source>
        <tissue evidence="5">Inner ear</tissue>
    </source>
</reference>
<reference evidence="19" key="2">
    <citation type="submission" date="2002-05" db="EMBL/GenBank/DDBJ databases">
        <authorList>
            <person name="Verpy E."/>
            <person name="Leibovici M."/>
            <person name="Zwaenepoel I."/>
            <person name="Blanchard S."/>
            <person name="Petit C."/>
        </authorList>
    </citation>
    <scope>NUCLEOTIDE SEQUENCE [MRNA] (ISOFORM 2)</scope>
</reference>
<reference evidence="19" key="3">
    <citation type="journal article" date="2004" name="Genome Res.">
        <title>The status, quality, and expansion of the NIH full-length cDNA project: the Mammalian Gene Collection (MGC).</title>
        <authorList>
            <consortium name="The MGC Project Team"/>
        </authorList>
    </citation>
    <scope>NUCLEOTIDE SEQUENCE [LARGE SCALE MRNA] (ISOFORM 1)</scope>
    <source>
        <tissue evidence="8">Colon</tissue>
    </source>
</reference>
<reference key="4">
    <citation type="journal article" date="2005" name="Science">
        <title>The transcriptional landscape of the mammalian genome.</title>
        <authorList>
            <person name="Carninci P."/>
            <person name="Kasukawa T."/>
            <person name="Katayama S."/>
            <person name="Gough J."/>
            <person name="Frith M.C."/>
            <person name="Maeda N."/>
            <person name="Oyama R."/>
            <person name="Ravasi T."/>
            <person name="Lenhard B."/>
            <person name="Wells C."/>
            <person name="Kodzius R."/>
            <person name="Shimokawa K."/>
            <person name="Bajic V.B."/>
            <person name="Brenner S.E."/>
            <person name="Batalov S."/>
            <person name="Forrest A.R."/>
            <person name="Zavolan M."/>
            <person name="Davis M.J."/>
            <person name="Wilming L.G."/>
            <person name="Aidinis V."/>
            <person name="Allen J.E."/>
            <person name="Ambesi-Impiombato A."/>
            <person name="Apweiler R."/>
            <person name="Aturaliya R.N."/>
            <person name="Bailey T.L."/>
            <person name="Bansal M."/>
            <person name="Baxter L."/>
            <person name="Beisel K.W."/>
            <person name="Bersano T."/>
            <person name="Bono H."/>
            <person name="Chalk A.M."/>
            <person name="Chiu K.P."/>
            <person name="Choudhary V."/>
            <person name="Christoffels A."/>
            <person name="Clutterbuck D.R."/>
            <person name="Crowe M.L."/>
            <person name="Dalla E."/>
            <person name="Dalrymple B.P."/>
            <person name="de Bono B."/>
            <person name="Della Gatta G."/>
            <person name="di Bernardo D."/>
            <person name="Down T."/>
            <person name="Engstrom P."/>
            <person name="Fagiolini M."/>
            <person name="Faulkner G."/>
            <person name="Fletcher C.F."/>
            <person name="Fukushima T."/>
            <person name="Furuno M."/>
            <person name="Futaki S."/>
            <person name="Gariboldi M."/>
            <person name="Georgii-Hemming P."/>
            <person name="Gingeras T.R."/>
            <person name="Gojobori T."/>
            <person name="Green R.E."/>
            <person name="Gustincich S."/>
            <person name="Harbers M."/>
            <person name="Hayashi Y."/>
            <person name="Hensch T.K."/>
            <person name="Hirokawa N."/>
            <person name="Hill D."/>
            <person name="Huminiecki L."/>
            <person name="Iacono M."/>
            <person name="Ikeo K."/>
            <person name="Iwama A."/>
            <person name="Ishikawa T."/>
            <person name="Jakt M."/>
            <person name="Kanapin A."/>
            <person name="Katoh M."/>
            <person name="Kawasawa Y."/>
            <person name="Kelso J."/>
            <person name="Kitamura H."/>
            <person name="Kitano H."/>
            <person name="Kollias G."/>
            <person name="Krishnan S.P."/>
            <person name="Kruger A."/>
            <person name="Kummerfeld S.K."/>
            <person name="Kurochkin I.V."/>
            <person name="Lareau L.F."/>
            <person name="Lazarevic D."/>
            <person name="Lipovich L."/>
            <person name="Liu J."/>
            <person name="Liuni S."/>
            <person name="McWilliam S."/>
            <person name="Madan Babu M."/>
            <person name="Madera M."/>
            <person name="Marchionni L."/>
            <person name="Matsuda H."/>
            <person name="Matsuzawa S."/>
            <person name="Miki H."/>
            <person name="Mignone F."/>
            <person name="Miyake S."/>
            <person name="Morris K."/>
            <person name="Mottagui-Tabar S."/>
            <person name="Mulder N."/>
            <person name="Nakano N."/>
            <person name="Nakauchi H."/>
            <person name="Ng P."/>
            <person name="Nilsson R."/>
            <person name="Nishiguchi S."/>
            <person name="Nishikawa S."/>
            <person name="Nori F."/>
            <person name="Ohara O."/>
            <person name="Okazaki Y."/>
            <person name="Orlando V."/>
            <person name="Pang K.C."/>
            <person name="Pavan W.J."/>
            <person name="Pavesi G."/>
            <person name="Pesole G."/>
            <person name="Petrovsky N."/>
            <person name="Piazza S."/>
            <person name="Reed J."/>
            <person name="Reid J.F."/>
            <person name="Ring B.Z."/>
            <person name="Ringwald M."/>
            <person name="Rost B."/>
            <person name="Ruan Y."/>
            <person name="Salzberg S.L."/>
            <person name="Sandelin A."/>
            <person name="Schneider C."/>
            <person name="Schoenbach C."/>
            <person name="Sekiguchi K."/>
            <person name="Semple C.A."/>
            <person name="Seno S."/>
            <person name="Sessa L."/>
            <person name="Sheng Y."/>
            <person name="Shibata Y."/>
            <person name="Shimada H."/>
            <person name="Shimada K."/>
            <person name="Silva D."/>
            <person name="Sinclair B."/>
            <person name="Sperling S."/>
            <person name="Stupka E."/>
            <person name="Sugiura K."/>
            <person name="Sultana R."/>
            <person name="Takenaka Y."/>
            <person name="Taki K."/>
            <person name="Tammoja K."/>
            <person name="Tan S.L."/>
            <person name="Tang S."/>
            <person name="Taylor M.S."/>
            <person name="Tegner J."/>
            <person name="Teichmann S.A."/>
            <person name="Ueda H.R."/>
            <person name="van Nimwegen E."/>
            <person name="Verardo R."/>
            <person name="Wei C.L."/>
            <person name="Yagi K."/>
            <person name="Yamanishi H."/>
            <person name="Zabarovsky E."/>
            <person name="Zhu S."/>
            <person name="Zimmer A."/>
            <person name="Hide W."/>
            <person name="Bult C."/>
            <person name="Grimmond S.M."/>
            <person name="Teasdale R.D."/>
            <person name="Liu E.T."/>
            <person name="Brusic V."/>
            <person name="Quackenbush J."/>
            <person name="Wahlestedt C."/>
            <person name="Mattick J.S."/>
            <person name="Hume D.A."/>
            <person name="Kai C."/>
            <person name="Sasaki D."/>
            <person name="Tomaru Y."/>
            <person name="Fukuda S."/>
            <person name="Kanamori-Katayama M."/>
            <person name="Suzuki M."/>
            <person name="Aoki J."/>
            <person name="Arakawa T."/>
            <person name="Iida J."/>
            <person name="Imamura K."/>
            <person name="Itoh M."/>
            <person name="Kato T."/>
            <person name="Kawaji H."/>
            <person name="Kawagashira N."/>
            <person name="Kawashima T."/>
            <person name="Kojima M."/>
            <person name="Kondo S."/>
            <person name="Konno H."/>
            <person name="Nakano K."/>
            <person name="Ninomiya N."/>
            <person name="Nishio T."/>
            <person name="Okada M."/>
            <person name="Plessy C."/>
            <person name="Shibata K."/>
            <person name="Shiraki T."/>
            <person name="Suzuki S."/>
            <person name="Tagami M."/>
            <person name="Waki K."/>
            <person name="Watahiki A."/>
            <person name="Okamura-Oho Y."/>
            <person name="Suzuki H."/>
            <person name="Kawai J."/>
            <person name="Hayashizaki Y."/>
        </authorList>
    </citation>
    <scope>NUCLEOTIDE SEQUENCE [LARGE SCALE MRNA] OF 740-852 (ISOFORM 1)</scope>
    <source>
        <strain>C57BL/6J</strain>
        <tissue>Small intestine</tissue>
    </source>
</reference>
<reference key="5">
    <citation type="journal article" date="2003" name="Hum. Mol. Genet.">
        <title>Usher syndrome type I G (USH1G) is caused by mutations in the gene encoding SANS, a protein that associates with the USH1C protein, harmonin.</title>
        <authorList>
            <person name="Weil D."/>
            <person name="El-Amraoui A."/>
            <person name="Masmoudi S."/>
            <person name="Mustapha M."/>
            <person name="Kikkawa Y."/>
            <person name="Laine S."/>
            <person name="Delmaghani S."/>
            <person name="Adato A."/>
            <person name="Nadifi S."/>
            <person name="Zina Z.B."/>
            <person name="Hamel C."/>
            <person name="Gal A."/>
            <person name="Ayadi H."/>
            <person name="Yonekawa H."/>
            <person name="Petit C."/>
        </authorList>
    </citation>
    <scope>INTERACTION WITH ANKS4B</scope>
</reference>
<reference key="6">
    <citation type="journal article" date="2004" name="Genes Cells">
        <title>Harp (harmonin-interacting, ankyrin repeat-containing protein), a novel protein that interacts with harmonin in epithelial tissues.</title>
        <authorList>
            <person name="Johnston A.M."/>
            <person name="Naselli G."/>
            <person name="Niwa H."/>
            <person name="Brodnicki T."/>
            <person name="Harrison L.C."/>
            <person name="Gonez L.J."/>
        </authorList>
    </citation>
    <scope>INTERACTION WITH ANKS4B</scope>
    <scope>DOMAIN</scope>
</reference>
<reference key="7">
    <citation type="journal article" date="2005" name="Hum. Mol. Genet.">
        <title>Scaffold protein harmonin (USH1C) provides molecular links between Usher syndrome type 1 and type 2.</title>
        <authorList>
            <person name="Reiners J."/>
            <person name="van Wijk E."/>
            <person name="Maerker T."/>
            <person name="Zimmermann U."/>
            <person name="Juergens K."/>
            <person name="te Brinke H."/>
            <person name="Overlack N."/>
            <person name="Roepman R."/>
            <person name="Knipper M."/>
            <person name="Kremer H."/>
            <person name="Wolfrum U."/>
        </authorList>
    </citation>
    <scope>INTERACTION WITH SLC4A7</scope>
</reference>
<reference key="8">
    <citation type="journal article" date="2005" name="Hum. Mol. Genet.">
        <title>Usherin, the defective protein in Usher syndrome type IIA, is likely to be a component of interstereocilia ankle links in the inner ear sensory cells.</title>
        <authorList>
            <person name="Adato A."/>
            <person name="Lefevre G."/>
            <person name="Delprat B."/>
            <person name="Michel V."/>
            <person name="Michalski N."/>
            <person name="Chardenoux S."/>
            <person name="Weil D."/>
            <person name="El-Amraoui A."/>
            <person name="Petit C."/>
        </authorList>
    </citation>
    <scope>INTERACTION WITH USH2A</scope>
</reference>
<reference key="9">
    <citation type="journal article" date="2009" name="Neuron">
        <title>Harmonin mutations cause mechanotransduction defects in cochlear hair cells.</title>
        <authorList>
            <person name="Grillet N."/>
            <person name="Xiong W."/>
            <person name="Reynolds A."/>
            <person name="Kazmierczak P."/>
            <person name="Sato T."/>
            <person name="Lillo C."/>
            <person name="Dumont R.A."/>
            <person name="Hintermann E."/>
            <person name="Sczaniecka A."/>
            <person name="Schwander M."/>
            <person name="Williams D."/>
            <person name="Kachar B."/>
            <person name="Gillespie P.G."/>
            <person name="Muller U."/>
        </authorList>
    </citation>
    <scope>FUNCTION</scope>
    <scope>TISSUE SPECIFICITY</scope>
    <scope>INTERACTION WITH CDH23 AND WITH F-ACTIN</scope>
    <scope>SUBCELLULAR LOCATION</scope>
</reference>
<reference key="10">
    <citation type="journal article" date="2010" name="Cell">
        <title>A tissue-specific atlas of mouse protein phosphorylation and expression.</title>
        <authorList>
            <person name="Huttlin E.L."/>
            <person name="Jedrychowski M.P."/>
            <person name="Elias J.E."/>
            <person name="Goswami T."/>
            <person name="Rad R."/>
            <person name="Beausoleil S.A."/>
            <person name="Villen J."/>
            <person name="Haas W."/>
            <person name="Sowa M.E."/>
            <person name="Gygi S.P."/>
        </authorList>
    </citation>
    <scope>PHOSPHORYLATION [LARGE SCALE ANALYSIS] AT SER-219</scope>
    <scope>IDENTIFICATION BY MASS SPECTROMETRY [LARGE SCALE ANALYSIS]</scope>
    <source>
        <tissue>Kidney</tissue>
    </source>
</reference>
<reference key="11">
    <citation type="journal article" date="2014" name="Cell">
        <title>Intestinal brush border assembly driven by protocadherin-based intermicrovillar adhesion.</title>
        <authorList>
            <person name="Crawley S.W."/>
            <person name="Shifrin D.A. Jr."/>
            <person name="Grega-Larson N.E."/>
            <person name="McConnell R.E."/>
            <person name="Benesh A.E."/>
            <person name="Mao S."/>
            <person name="Zheng Y."/>
            <person name="Zheng Q.Y."/>
            <person name="Nam K.T."/>
            <person name="Millis B.A."/>
            <person name="Kachar B."/>
            <person name="Tyska M.J."/>
        </authorList>
    </citation>
    <scope>FUNCTION</scope>
    <scope>SUBCELLULAR LOCATION</scope>
    <scope>TISSUE SPECIFICITY</scope>
    <scope>DISRUPTION PHENOTYPE</scope>
</reference>
<reference key="12">
    <citation type="journal article" date="2016" name="Dev. Cell">
        <title>Mechanistic basis of organization of the Harmonin/USH1C-mediated brush border microvilli tip-link complex.</title>
        <authorList>
            <person name="Li J."/>
            <person name="He Y."/>
            <person name="Lu Q."/>
            <person name="Zhang M."/>
        </authorList>
    </citation>
    <scope>INTERACTION WITH CDHR2 AND MYO7B</scope>
</reference>
<reference key="13">
    <citation type="journal article" date="2016" name="Dev. Cell">
        <title>ANKS4B is essential for intermicrovillar adhesion complex formation.</title>
        <authorList>
            <person name="Crawley S.W."/>
            <person name="Weck M.L."/>
            <person name="Grega-Larson N.E."/>
            <person name="Shifrin D.A. Jr."/>
            <person name="Tyska M.J."/>
        </authorList>
    </citation>
    <scope>FUNCTION</scope>
</reference>
<reference key="14">
    <citation type="submission" date="2004-05" db="PDB data bank">
        <title>Solution structure of the third PDZ domain of mouse harmonin.</title>
        <authorList>
            <consortium name="RIKEN structural genomics initiative (RSGI)"/>
        </authorList>
    </citation>
    <scope>STRUCTURE BY NMR OF 742-849</scope>
</reference>
<sequence>MDRKVAREFRHKVDFLIENDAEKDYLYDVLRMYHQTMDVAVLVGDLKLVINEPNRLPLFDAIRPLIPLKHQVEYDQLTPRRSRKLKEVRLDRLHPEGLGLSVRGGLEFGCGLFISHLIKGGQADSVGLQVGDEIVRINGYSISSCTHEEVINLIRTKKTVSIKVRHIGLIPVKSSPEESLKWQYVDQFVSESGGVRGGLGSPGNRTTKEKKVFISLVGSRGLGCSISSGPIQKPGIFVSHVKPGSLSAEVGLETGDQIVEVNGIDFTNLDHKEAVNVLKSSRSLTISIVAGAGRELFMTDRERLEEARQRELQRQELLMQKRLAMESNKILQEQQEMERQRRKEIAQKAAEENERYRKEMEQISEEEEKFKKQWEEDWGSKEQLILPKTITAEVHPVPLRKPKSFGWFYRYDGKFPTIRKKAKEKKKAKYDSLQDLRKNKKELEFEQKLYKEKEEMLEKEKQLKINRLAQEVSETEREDLEESEKTQYWVERLCQTRLEQISSAENEIPEMTTGPPPPPPSVSPLAPPLRRFAGGIHLHTTDLDDIPLDMFYYPPKTPSALPVMPHPPSVNSPSKVPAPPVLPSSGHVSSSSSPWVQRTPPPIPIPPPPSIPTQDLTPTRPLPSALEEALGNHPFRTGDPGHPADDWEANTHSGKPSSSPTTERSFPPAPKTFCPSPQPPRGPGVSTISKPVMVHQEHNFVYRPAVKSEVLPQEMLKRMVVYQTAFRQDFRKYEEGFDPYSMFSPEQIAGKDVRLLRIKKEGSLDLALEGGVDSPVGKVVVSAVYEGGAAERHGGVVKGDEIMAINGKIVTDYTLAEAEAALQKAWNQGGDWIDLVVAVCPPKEYDDELSSLPSSAAESPQLARKQLEAYEPVCRHGFFLQLEPTNLLLKSRERNQTDPSWRPASSAPSP</sequence>
<accession>Q9ES64</accession>
<accession>Q91XD1</accession>
<accession>Q9CVG7</accession>
<accession>Q9ES65</accession>